<protein>
    <recommendedName>
        <fullName>Thioredoxin-like protein 1</fullName>
    </recommendedName>
    <alternativeName>
        <fullName>Thioredoxin-related protein</fullName>
    </alternativeName>
</protein>
<sequence>MVGVKPVGSDPDFQPELSGAGSRLAVVKFTMRGCGPCLRIAPAFSSMSNKYPQAVFLEVDVHQCQGTAATNNISATPTFLFFRNKVRIDQYQGADAVGLEEKIKQHLENDPGSNEDTDIPKGYMDLMPFINKAGCECLNESDEHGFDNCLRKDLSFLESDCDEQLLITVAFNQPVKLYSMKFQGPDNGQGPKYVKIFINLPRSMDFEEAERSEPTQALELTEDDIKEDGIVPLRYVKFQNVNSVTLFVQSNQGEEETTRISYFTFIGTPVQATNMNDFKRVVGKKGESH</sequence>
<accession>Q920J4</accession>
<reference key="1">
    <citation type="submission" date="1999-04" db="EMBL/GenBank/DDBJ databases">
        <title>Cloning a novel rat thioredoxin-related protein.</title>
        <authorList>
            <person name="Tang H.B."/>
            <person name="Ip F.C.F."/>
            <person name="Cheung W.M.W."/>
            <person name="Ip N.Y."/>
        </authorList>
    </citation>
    <scope>NUCLEOTIDE SEQUENCE [MRNA]</scope>
    <source>
        <strain>Sprague-Dawley</strain>
    </source>
</reference>
<reference key="2">
    <citation type="journal article" date="2004" name="Genome Res.">
        <title>The status, quality, and expansion of the NIH full-length cDNA project: the Mammalian Gene Collection (MGC).</title>
        <authorList>
            <consortium name="The MGC Project Team"/>
        </authorList>
    </citation>
    <scope>NUCLEOTIDE SEQUENCE [LARGE SCALE MRNA]</scope>
    <source>
        <tissue>Thymus</tissue>
    </source>
</reference>
<reference key="3">
    <citation type="submission" date="2007-04" db="UniProtKB">
        <authorList>
            <person name="Lubec G."/>
            <person name="Chen W.-Q."/>
        </authorList>
    </citation>
    <scope>PROTEIN SEQUENCE OF 238-259</scope>
    <scope>IDENTIFICATION BY MASS SPECTROMETRY</scope>
    <source>
        <strain>Sprague-Dawley</strain>
        <tissue>Hippocampus</tissue>
    </source>
</reference>
<reference key="4">
    <citation type="journal article" date="2012" name="Nat. Commun.">
        <title>Quantitative maps of protein phosphorylation sites across 14 different rat organs and tissues.</title>
        <authorList>
            <person name="Lundby A."/>
            <person name="Secher A."/>
            <person name="Lage K."/>
            <person name="Nordsborg N.B."/>
            <person name="Dmytriyev A."/>
            <person name="Lundby C."/>
            <person name="Olsen J.V."/>
        </authorList>
    </citation>
    <scope>PHOSPHORYLATION [LARGE SCALE ANALYSIS] AT SER-113</scope>
    <scope>IDENTIFICATION BY MASS SPECTROMETRY [LARGE SCALE ANALYSIS]</scope>
</reference>
<gene>
    <name type="primary">Txnl1</name>
    <name type="synonym">Trp</name>
</gene>
<organism>
    <name type="scientific">Rattus norvegicus</name>
    <name type="common">Rat</name>
    <dbReference type="NCBI Taxonomy" id="10116"/>
    <lineage>
        <taxon>Eukaryota</taxon>
        <taxon>Metazoa</taxon>
        <taxon>Chordata</taxon>
        <taxon>Craniata</taxon>
        <taxon>Vertebrata</taxon>
        <taxon>Euteleostomi</taxon>
        <taxon>Mammalia</taxon>
        <taxon>Eutheria</taxon>
        <taxon>Euarchontoglires</taxon>
        <taxon>Glires</taxon>
        <taxon>Rodentia</taxon>
        <taxon>Myomorpha</taxon>
        <taxon>Muroidea</taxon>
        <taxon>Muridae</taxon>
        <taxon>Murinae</taxon>
        <taxon>Rattus</taxon>
    </lineage>
</organism>
<feature type="chain" id="PRO_0000120018" description="Thioredoxin-like protein 1">
    <location>
        <begin position="1"/>
        <end position="289"/>
    </location>
</feature>
<feature type="domain" description="Thioredoxin">
    <location>
        <begin position="2"/>
        <end position="109"/>
    </location>
</feature>
<feature type="domain" description="PITH" evidence="2">
    <location>
        <begin position="115"/>
        <end position="285"/>
    </location>
</feature>
<feature type="modified residue" description="Phosphoserine" evidence="3">
    <location>
        <position position="113"/>
    </location>
</feature>
<feature type="disulfide bond" description="Redox-active" evidence="1">
    <location>
        <begin position="34"/>
        <end position="37"/>
    </location>
</feature>
<proteinExistence type="evidence at protein level"/>
<evidence type="ECO:0000250" key="1"/>
<evidence type="ECO:0000255" key="2">
    <source>
        <dbReference type="PROSITE-ProRule" id="PRU00864"/>
    </source>
</evidence>
<evidence type="ECO:0007744" key="3">
    <source>
    </source>
</evidence>
<name>TXNL1_RAT</name>
<keyword id="KW-0963">Cytoplasm</keyword>
<keyword id="KW-0903">Direct protein sequencing</keyword>
<keyword id="KW-1015">Disulfide bond</keyword>
<keyword id="KW-0249">Electron transport</keyword>
<keyword id="KW-0539">Nucleus</keyword>
<keyword id="KW-0597">Phosphoprotein</keyword>
<keyword id="KW-0647">Proteasome</keyword>
<keyword id="KW-0676">Redox-active center</keyword>
<keyword id="KW-1185">Reference proteome</keyword>
<keyword id="KW-0813">Transport</keyword>
<comment type="function">
    <text evidence="1">Active thioredoxin with a redox potential of about -250 mV.</text>
</comment>
<comment type="subunit">
    <text evidence="1">Component of the 19S regulatory cap of the 26S proteasome. Interacts with PSMD14/RPN11. Interacts with, and reduces EEF1A1 (By similarity).</text>
</comment>
<comment type="subcellular location">
    <subcellularLocation>
        <location evidence="1">Cytoplasm</location>
    </subcellularLocation>
    <subcellularLocation>
        <location evidence="1">Nucleus</location>
    </subcellularLocation>
    <text evidence="1">At least 85% of the cellular TXNL1 is proteasome-associated.</text>
</comment>
<dbReference type="EMBL" id="AF140358">
    <property type="protein sequence ID" value="AAK98516.1"/>
    <property type="molecule type" value="mRNA"/>
</dbReference>
<dbReference type="EMBL" id="BC098908">
    <property type="protein sequence ID" value="AAH98908.1"/>
    <property type="molecule type" value="mRNA"/>
</dbReference>
<dbReference type="RefSeq" id="NP_543163.1">
    <property type="nucleotide sequence ID" value="NM_080887.2"/>
</dbReference>
<dbReference type="BMRB" id="Q920J4"/>
<dbReference type="SMR" id="Q920J4"/>
<dbReference type="BioGRID" id="250856">
    <property type="interactions" value="2"/>
</dbReference>
<dbReference type="FunCoup" id="Q920J4">
    <property type="interactions" value="3530"/>
</dbReference>
<dbReference type="IntAct" id="Q920J4">
    <property type="interactions" value="3"/>
</dbReference>
<dbReference type="MINT" id="Q920J4"/>
<dbReference type="STRING" id="10116.ENSRNOP00000074049"/>
<dbReference type="iPTMnet" id="Q920J4"/>
<dbReference type="PhosphoSitePlus" id="Q920J4"/>
<dbReference type="jPOST" id="Q920J4"/>
<dbReference type="PaxDb" id="10116-ENSRNOP00000025510"/>
<dbReference type="Ensembl" id="ENSRNOT00000025510.5">
    <property type="protein sequence ID" value="ENSRNOP00000025510.2"/>
    <property type="gene ID" value="ENSRNOG00000018818.7"/>
</dbReference>
<dbReference type="GeneID" id="140922"/>
<dbReference type="KEGG" id="rno:140922"/>
<dbReference type="UCSC" id="RGD:621717">
    <property type="organism name" value="rat"/>
</dbReference>
<dbReference type="AGR" id="RGD:621717"/>
<dbReference type="CTD" id="9352"/>
<dbReference type="RGD" id="621717">
    <property type="gene designation" value="Txnl1"/>
</dbReference>
<dbReference type="eggNOG" id="KOG0908">
    <property type="taxonomic scope" value="Eukaryota"/>
</dbReference>
<dbReference type="GeneTree" id="ENSGT00940000156170"/>
<dbReference type="HOGENOM" id="CLU_072377_0_2_1"/>
<dbReference type="InParanoid" id="Q920J4"/>
<dbReference type="Reactome" id="R-RNO-9013418">
    <property type="pathway name" value="RHOBTB2 GTPase cycle"/>
</dbReference>
<dbReference type="Reactome" id="R-RNO-9013420">
    <property type="pathway name" value="RHOU GTPase cycle"/>
</dbReference>
<dbReference type="Reactome" id="R-RNO-9013422">
    <property type="pathway name" value="RHOBTB1 GTPase cycle"/>
</dbReference>
<dbReference type="Reactome" id="R-RNO-9013424">
    <property type="pathway name" value="RHOV GTPase cycle"/>
</dbReference>
<dbReference type="Reactome" id="R-RNO-9696264">
    <property type="pathway name" value="RND3 GTPase cycle"/>
</dbReference>
<dbReference type="Reactome" id="R-RNO-9696270">
    <property type="pathway name" value="RND2 GTPase cycle"/>
</dbReference>
<dbReference type="Reactome" id="R-RNO-9696273">
    <property type="pathway name" value="RND1 GTPase cycle"/>
</dbReference>
<dbReference type="PRO" id="PR:Q920J4"/>
<dbReference type="Proteomes" id="UP000002494">
    <property type="component" value="Chromosome 18"/>
</dbReference>
<dbReference type="Bgee" id="ENSRNOG00000018818">
    <property type="expression patterns" value="Expressed in thymus and 20 other cell types or tissues"/>
</dbReference>
<dbReference type="ExpressionAtlas" id="Q920J4">
    <property type="expression patterns" value="baseline and differential"/>
</dbReference>
<dbReference type="GO" id="GO:0005737">
    <property type="term" value="C:cytoplasm"/>
    <property type="evidence" value="ECO:0000266"/>
    <property type="project" value="RGD"/>
</dbReference>
<dbReference type="GO" id="GO:0005829">
    <property type="term" value="C:cytosol"/>
    <property type="evidence" value="ECO:0000318"/>
    <property type="project" value="GO_Central"/>
</dbReference>
<dbReference type="GO" id="GO:0005634">
    <property type="term" value="C:nucleus"/>
    <property type="evidence" value="ECO:0007669"/>
    <property type="project" value="UniProtKB-SubCell"/>
</dbReference>
<dbReference type="GO" id="GO:0000502">
    <property type="term" value="C:proteasome complex"/>
    <property type="evidence" value="ECO:0007669"/>
    <property type="project" value="UniProtKB-KW"/>
</dbReference>
<dbReference type="GO" id="GO:0015036">
    <property type="term" value="F:disulfide oxidoreductase activity"/>
    <property type="evidence" value="ECO:0000266"/>
    <property type="project" value="RGD"/>
</dbReference>
<dbReference type="GO" id="GO:0015035">
    <property type="term" value="F:protein-disulfide reductase activity"/>
    <property type="evidence" value="ECO:0000318"/>
    <property type="project" value="GO_Central"/>
</dbReference>
<dbReference type="CDD" id="cd02947">
    <property type="entry name" value="TRX_family"/>
    <property type="match status" value="1"/>
</dbReference>
<dbReference type="FunFam" id="2.60.120.470:FF:000001">
    <property type="entry name" value="Thioredoxin-like 1, isoform CRA_c"/>
    <property type="match status" value="1"/>
</dbReference>
<dbReference type="FunFam" id="3.40.30.10:FF:000082">
    <property type="entry name" value="Thioredoxin-like protein 1"/>
    <property type="match status" value="1"/>
</dbReference>
<dbReference type="Gene3D" id="3.40.30.10">
    <property type="entry name" value="Glutaredoxin"/>
    <property type="match status" value="1"/>
</dbReference>
<dbReference type="Gene3D" id="2.60.120.470">
    <property type="entry name" value="PITH domain"/>
    <property type="match status" value="1"/>
</dbReference>
<dbReference type="InterPro" id="IPR008979">
    <property type="entry name" value="Galactose-bd-like_sf"/>
</dbReference>
<dbReference type="InterPro" id="IPR010400">
    <property type="entry name" value="PITH_dom"/>
</dbReference>
<dbReference type="InterPro" id="IPR037047">
    <property type="entry name" value="PITH_dom_sf"/>
</dbReference>
<dbReference type="InterPro" id="IPR036249">
    <property type="entry name" value="Thioredoxin-like_sf"/>
</dbReference>
<dbReference type="InterPro" id="IPR017937">
    <property type="entry name" value="Thioredoxin_CS"/>
</dbReference>
<dbReference type="InterPro" id="IPR013766">
    <property type="entry name" value="Thioredoxin_domain"/>
</dbReference>
<dbReference type="PANTHER" id="PTHR46115">
    <property type="entry name" value="THIOREDOXIN-LIKE PROTEIN 1"/>
    <property type="match status" value="1"/>
</dbReference>
<dbReference type="Pfam" id="PF06201">
    <property type="entry name" value="PITH"/>
    <property type="match status" value="1"/>
</dbReference>
<dbReference type="Pfam" id="PF00085">
    <property type="entry name" value="Thioredoxin"/>
    <property type="match status" value="1"/>
</dbReference>
<dbReference type="SUPFAM" id="SSF49785">
    <property type="entry name" value="Galactose-binding domain-like"/>
    <property type="match status" value="1"/>
</dbReference>
<dbReference type="SUPFAM" id="SSF52833">
    <property type="entry name" value="Thioredoxin-like"/>
    <property type="match status" value="1"/>
</dbReference>
<dbReference type="PROSITE" id="PS51532">
    <property type="entry name" value="PITH"/>
    <property type="match status" value="1"/>
</dbReference>
<dbReference type="PROSITE" id="PS00194">
    <property type="entry name" value="THIOREDOXIN_1"/>
    <property type="match status" value="1"/>
</dbReference>